<keyword id="KW-0963">Cytoplasm</keyword>
<keyword id="KW-0328">Glycosyltransferase</keyword>
<keyword id="KW-0660">Purine salvage</keyword>
<keyword id="KW-1185">Reference proteome</keyword>
<keyword id="KW-0808">Transferase</keyword>
<organism>
    <name type="scientific">Shewanella denitrificans (strain OS217 / ATCC BAA-1090 / DSM 15013)</name>
    <dbReference type="NCBI Taxonomy" id="318161"/>
    <lineage>
        <taxon>Bacteria</taxon>
        <taxon>Pseudomonadati</taxon>
        <taxon>Pseudomonadota</taxon>
        <taxon>Gammaproteobacteria</taxon>
        <taxon>Alteromonadales</taxon>
        <taxon>Shewanellaceae</taxon>
        <taxon>Shewanella</taxon>
    </lineage>
</organism>
<protein>
    <recommendedName>
        <fullName evidence="1">Adenine phosphoribosyltransferase</fullName>
        <shortName evidence="1">APRT</shortName>
        <ecNumber evidence="1">2.4.2.7</ecNumber>
    </recommendedName>
</protein>
<sequence>MTMTMNKDSLALIKQSIKTIADYPKPGIMFRDVTSLLEDASAYQATIALFVEKYQGMGFTKVVGTEARGFLFGAPLALELGIGFVPVRKPGKLPRKTIAQSYELEYGMDTLEIHVDAIKPEDKVLVVDDLLATGGTIEATVKLIRQLGGQVEHAAFVISLPDIGGEKRLAGLGLDVFALCEFEGE</sequence>
<comment type="function">
    <text evidence="1">Catalyzes a salvage reaction resulting in the formation of AMP, that is energically less costly than de novo synthesis.</text>
</comment>
<comment type="catalytic activity">
    <reaction evidence="1">
        <text>AMP + diphosphate = 5-phospho-alpha-D-ribose 1-diphosphate + adenine</text>
        <dbReference type="Rhea" id="RHEA:16609"/>
        <dbReference type="ChEBI" id="CHEBI:16708"/>
        <dbReference type="ChEBI" id="CHEBI:33019"/>
        <dbReference type="ChEBI" id="CHEBI:58017"/>
        <dbReference type="ChEBI" id="CHEBI:456215"/>
        <dbReference type="EC" id="2.4.2.7"/>
    </reaction>
</comment>
<comment type="pathway">
    <text evidence="1">Purine metabolism; AMP biosynthesis via salvage pathway; AMP from adenine: step 1/1.</text>
</comment>
<comment type="subunit">
    <text evidence="1">Homodimer.</text>
</comment>
<comment type="subcellular location">
    <subcellularLocation>
        <location evidence="1">Cytoplasm</location>
    </subcellularLocation>
</comment>
<comment type="similarity">
    <text evidence="1">Belongs to the purine/pyrimidine phosphoribosyltransferase family.</text>
</comment>
<evidence type="ECO:0000255" key="1">
    <source>
        <dbReference type="HAMAP-Rule" id="MF_00004"/>
    </source>
</evidence>
<feature type="chain" id="PRO_0000321403" description="Adenine phosphoribosyltransferase">
    <location>
        <begin position="1"/>
        <end position="185"/>
    </location>
</feature>
<accession>Q12LL4</accession>
<dbReference type="EC" id="2.4.2.7" evidence="1"/>
<dbReference type="EMBL" id="CP000302">
    <property type="protein sequence ID" value="ABE55662.1"/>
    <property type="molecule type" value="Genomic_DNA"/>
</dbReference>
<dbReference type="SMR" id="Q12LL4"/>
<dbReference type="STRING" id="318161.Sden_2382"/>
<dbReference type="KEGG" id="sdn:Sden_2382"/>
<dbReference type="eggNOG" id="COG0503">
    <property type="taxonomic scope" value="Bacteria"/>
</dbReference>
<dbReference type="HOGENOM" id="CLU_063339_3_0_6"/>
<dbReference type="UniPathway" id="UPA00588">
    <property type="reaction ID" value="UER00646"/>
</dbReference>
<dbReference type="Proteomes" id="UP000001982">
    <property type="component" value="Chromosome"/>
</dbReference>
<dbReference type="GO" id="GO:0005829">
    <property type="term" value="C:cytosol"/>
    <property type="evidence" value="ECO:0007669"/>
    <property type="project" value="TreeGrafter"/>
</dbReference>
<dbReference type="GO" id="GO:0003999">
    <property type="term" value="F:adenine phosphoribosyltransferase activity"/>
    <property type="evidence" value="ECO:0007669"/>
    <property type="project" value="UniProtKB-UniRule"/>
</dbReference>
<dbReference type="GO" id="GO:0006168">
    <property type="term" value="P:adenine salvage"/>
    <property type="evidence" value="ECO:0007669"/>
    <property type="project" value="InterPro"/>
</dbReference>
<dbReference type="GO" id="GO:0044209">
    <property type="term" value="P:AMP salvage"/>
    <property type="evidence" value="ECO:0007669"/>
    <property type="project" value="UniProtKB-UniRule"/>
</dbReference>
<dbReference type="GO" id="GO:0006166">
    <property type="term" value="P:purine ribonucleoside salvage"/>
    <property type="evidence" value="ECO:0007669"/>
    <property type="project" value="UniProtKB-KW"/>
</dbReference>
<dbReference type="CDD" id="cd06223">
    <property type="entry name" value="PRTases_typeI"/>
    <property type="match status" value="1"/>
</dbReference>
<dbReference type="FunFam" id="3.40.50.2020:FF:000004">
    <property type="entry name" value="Adenine phosphoribosyltransferase"/>
    <property type="match status" value="1"/>
</dbReference>
<dbReference type="Gene3D" id="3.40.50.2020">
    <property type="match status" value="1"/>
</dbReference>
<dbReference type="HAMAP" id="MF_00004">
    <property type="entry name" value="Aden_phosphoribosyltr"/>
    <property type="match status" value="1"/>
</dbReference>
<dbReference type="InterPro" id="IPR005764">
    <property type="entry name" value="Ade_phspho_trans"/>
</dbReference>
<dbReference type="InterPro" id="IPR050120">
    <property type="entry name" value="Adenine_PRTase"/>
</dbReference>
<dbReference type="InterPro" id="IPR000836">
    <property type="entry name" value="PRibTrfase_dom"/>
</dbReference>
<dbReference type="InterPro" id="IPR029057">
    <property type="entry name" value="PRTase-like"/>
</dbReference>
<dbReference type="NCBIfam" id="TIGR01090">
    <property type="entry name" value="apt"/>
    <property type="match status" value="1"/>
</dbReference>
<dbReference type="NCBIfam" id="NF002632">
    <property type="entry name" value="PRK02304.1-1"/>
    <property type="match status" value="1"/>
</dbReference>
<dbReference type="NCBIfam" id="NF002634">
    <property type="entry name" value="PRK02304.1-3"/>
    <property type="match status" value="1"/>
</dbReference>
<dbReference type="NCBIfam" id="NF002636">
    <property type="entry name" value="PRK02304.1-5"/>
    <property type="match status" value="1"/>
</dbReference>
<dbReference type="PANTHER" id="PTHR11776">
    <property type="entry name" value="ADENINE PHOSPHORIBOSYLTRANSFERASE"/>
    <property type="match status" value="1"/>
</dbReference>
<dbReference type="PANTHER" id="PTHR11776:SF7">
    <property type="entry name" value="PHOSPHORIBOSYLTRANSFERASE DOMAIN-CONTAINING PROTEIN"/>
    <property type="match status" value="1"/>
</dbReference>
<dbReference type="Pfam" id="PF00156">
    <property type="entry name" value="Pribosyltran"/>
    <property type="match status" value="1"/>
</dbReference>
<dbReference type="SUPFAM" id="SSF53271">
    <property type="entry name" value="PRTase-like"/>
    <property type="match status" value="1"/>
</dbReference>
<dbReference type="PROSITE" id="PS00103">
    <property type="entry name" value="PUR_PYR_PR_TRANSFER"/>
    <property type="match status" value="1"/>
</dbReference>
<gene>
    <name evidence="1" type="primary">apt</name>
    <name type="ordered locus">Sden_2382</name>
</gene>
<reference key="1">
    <citation type="submission" date="2006-03" db="EMBL/GenBank/DDBJ databases">
        <title>Complete sequence of Shewanella denitrificans OS217.</title>
        <authorList>
            <consortium name="US DOE Joint Genome Institute"/>
            <person name="Copeland A."/>
            <person name="Lucas S."/>
            <person name="Lapidus A."/>
            <person name="Barry K."/>
            <person name="Detter J.C."/>
            <person name="Glavina del Rio T."/>
            <person name="Hammon N."/>
            <person name="Israni S."/>
            <person name="Dalin E."/>
            <person name="Tice H."/>
            <person name="Pitluck S."/>
            <person name="Brettin T."/>
            <person name="Bruce D."/>
            <person name="Han C."/>
            <person name="Tapia R."/>
            <person name="Gilna P."/>
            <person name="Kiss H."/>
            <person name="Schmutz J."/>
            <person name="Larimer F."/>
            <person name="Land M."/>
            <person name="Hauser L."/>
            <person name="Kyrpides N."/>
            <person name="Lykidis A."/>
            <person name="Richardson P."/>
        </authorList>
    </citation>
    <scope>NUCLEOTIDE SEQUENCE [LARGE SCALE GENOMIC DNA]</scope>
    <source>
        <strain>OS217 / ATCC BAA-1090 / DSM 15013</strain>
    </source>
</reference>
<name>APT_SHEDO</name>
<proteinExistence type="inferred from homology"/>